<organismHost>
    <name type="scientific">Cercopithecidae</name>
    <name type="common">Old World monkeys</name>
    <dbReference type="NCBI Taxonomy" id="9527"/>
</organismHost>
<accession>P27984</accession>
<protein>
    <recommendedName>
        <fullName>Protein Vpx</fullName>
    </recommendedName>
    <alternativeName>
        <fullName>Viral protein X</fullName>
    </alternativeName>
    <alternativeName>
        <fullName>X ORF protein</fullName>
    </alternativeName>
</protein>
<organism>
    <name type="scientific">Simian immunodeficiency virus agm.vervet (isolate AGM3)</name>
    <name type="common">SIV-agm.ver</name>
    <name type="synonym">Simian immunodeficiency virus African green monkey vervet</name>
    <dbReference type="NCBI Taxonomy" id="11730"/>
    <lineage>
        <taxon>Viruses</taxon>
        <taxon>Riboviria</taxon>
        <taxon>Pararnavirae</taxon>
        <taxon>Artverviricota</taxon>
        <taxon>Revtraviricetes</taxon>
        <taxon>Ortervirales</taxon>
        <taxon>Retroviridae</taxon>
        <taxon>Orthoretrovirinae</taxon>
        <taxon>Lentivirus</taxon>
        <taxon>Simian immunodeficiency virus</taxon>
    </lineage>
</organism>
<gene>
    <name type="primary">vpx</name>
</gene>
<reference key="1">
    <citation type="journal article" date="1990" name="Virology">
        <title>Complete nucleotide sequence of a simian immunodeficiency virus from African green monkeys: a novel type of intragroup divergence.</title>
        <authorList>
            <person name="Baier M."/>
            <person name="Garber C."/>
            <person name="Mueller C."/>
            <person name="Cichutek K."/>
            <person name="Kurth R."/>
        </authorList>
    </citation>
    <scope>NUCLEOTIDE SEQUENCE [GENOMIC RNA]</scope>
</reference>
<proteinExistence type="inferred from homology"/>
<comment type="function">
    <text evidence="1">Plays a role in nuclear translocation of the viral pre-integration complex (PIC), thus is required for the virus to infect non-dividing cells. Targets specific host proteins for degradation by the 26S proteasome. Acts by associating with the cellular CUL4A-DDB1 E3 ligase complex through direct interaction with host VPRPB/DCAF-1. This change in the E3 ligase substrate specificity results in the degradation of host SAMHD1. In turn, SAMHD1 depletion allows viral replication in host myeloid cells by preventing SAMHD1-mediated hydrolysis of intracellular dNTPs necessary for reverse transcription (By similarity).</text>
</comment>
<comment type="subunit">
    <text evidence="1">Interacts with the P6 region of unprocessed GAG. Interacts with host VPRBP/DCAF1, leading to change substrate specificity of the CUL4A-DDB1 E3 ligase complex (By similarity).</text>
</comment>
<comment type="subcellular location">
    <subcellularLocation>
        <location>Virion</location>
    </subcellularLocation>
    <subcellularLocation>
        <location>Host nucleus</location>
    </subcellularLocation>
    <text evidence="1">Nuclear just after virion uncoating, or if expressed in the absence of unprocessed GAG.</text>
</comment>
<comment type="miscellaneous">
    <text>This is an African green monkey isolate.</text>
</comment>
<comment type="similarity">
    <text evidence="3">Belongs to the lentivirus VPX protein family.</text>
</comment>
<sequence>MASGRDPREARPGELEIWDLSREPWDEWLRDMLEDINQEAKMHFGRELLFQVWNYCQEEGERNRTPMLERAYKYYKLVQKALFVHFRCGCRRRQPFEPYEERRDGQGGGRAGRVPPGLD</sequence>
<dbReference type="EMBL" id="M30931">
    <property type="protein sequence ID" value="AAA91916.1"/>
    <property type="molecule type" value="Genomic_RNA"/>
</dbReference>
<dbReference type="SMR" id="P27984"/>
<dbReference type="GO" id="GO:0042025">
    <property type="term" value="C:host cell nucleus"/>
    <property type="evidence" value="ECO:0007669"/>
    <property type="project" value="UniProtKB-SubCell"/>
</dbReference>
<dbReference type="GO" id="GO:0044423">
    <property type="term" value="C:virion component"/>
    <property type="evidence" value="ECO:0007669"/>
    <property type="project" value="UniProtKB-KW"/>
</dbReference>
<dbReference type="GO" id="GO:0052170">
    <property type="term" value="P:symbiont-mediated suppression of host innate immune response"/>
    <property type="evidence" value="ECO:0007669"/>
    <property type="project" value="UniProtKB-KW"/>
</dbReference>
<dbReference type="GO" id="GO:0019058">
    <property type="term" value="P:viral life cycle"/>
    <property type="evidence" value="ECO:0007669"/>
    <property type="project" value="InterPro"/>
</dbReference>
<dbReference type="Gene3D" id="1.20.5.4730">
    <property type="match status" value="1"/>
</dbReference>
<dbReference type="InterPro" id="IPR053711">
    <property type="entry name" value="Lentiviral_Vpx_assoc_factor"/>
</dbReference>
<dbReference type="InterPro" id="IPR000012">
    <property type="entry name" value="RetroV_VpR/X"/>
</dbReference>
<dbReference type="Pfam" id="PF00522">
    <property type="entry name" value="VPR"/>
    <property type="match status" value="1"/>
</dbReference>
<dbReference type="PRINTS" id="PR00444">
    <property type="entry name" value="HIVVPRVPX"/>
</dbReference>
<name>VPX_SIVVG</name>
<feature type="chain" id="PRO_0000085400" description="Protein Vpx">
    <location>
        <begin position="1"/>
        <end position="119"/>
    </location>
</feature>
<feature type="region of interest" description="Disordered" evidence="2">
    <location>
        <begin position="98"/>
        <end position="119"/>
    </location>
</feature>
<evidence type="ECO:0000250" key="1"/>
<evidence type="ECO:0000256" key="2">
    <source>
        <dbReference type="SAM" id="MobiDB-lite"/>
    </source>
</evidence>
<evidence type="ECO:0000305" key="3"/>
<keyword id="KW-1048">Host nucleus</keyword>
<keyword id="KW-0945">Host-virus interaction</keyword>
<keyword id="KW-1090">Inhibition of host innate immune response by virus</keyword>
<keyword id="KW-0899">Viral immunoevasion</keyword>
<keyword id="KW-0946">Virion</keyword>